<name>DSE1_YEAST</name>
<organism>
    <name type="scientific">Saccharomyces cerevisiae (strain ATCC 204508 / S288c)</name>
    <name type="common">Baker's yeast</name>
    <dbReference type="NCBI Taxonomy" id="559292"/>
    <lineage>
        <taxon>Eukaryota</taxon>
        <taxon>Fungi</taxon>
        <taxon>Dikarya</taxon>
        <taxon>Ascomycota</taxon>
        <taxon>Saccharomycotina</taxon>
        <taxon>Saccharomycetes</taxon>
        <taxon>Saccharomycetales</taxon>
        <taxon>Saccharomycetaceae</taxon>
        <taxon>Saccharomyces</taxon>
    </lineage>
</organism>
<proteinExistence type="evidence at protein level"/>
<gene>
    <name type="primary">DSE1</name>
    <name type="ordered locus">YER124C</name>
    <name type="ORF">SYGP-ORF48</name>
</gene>
<protein>
    <recommendedName>
        <fullName>Protein DSE1</fullName>
    </recommendedName>
    <alternativeName>
        <fullName>Daughter-specific expression protein 1</fullName>
    </alternativeName>
</protein>
<accession>P40077</accession>
<accession>D3DM30</accession>
<dbReference type="EMBL" id="U18916">
    <property type="protein sequence ID" value="AAC03222.1"/>
    <property type="molecule type" value="Genomic_DNA"/>
</dbReference>
<dbReference type="EMBL" id="BK006939">
    <property type="protein sequence ID" value="DAA07784.1"/>
    <property type="molecule type" value="Genomic_DNA"/>
</dbReference>
<dbReference type="PIR" id="S50627">
    <property type="entry name" value="S50627"/>
</dbReference>
<dbReference type="RefSeq" id="NP_011050.3">
    <property type="nucleotide sequence ID" value="NM_001179014.3"/>
</dbReference>
<dbReference type="BioGRID" id="36868">
    <property type="interactions" value="97"/>
</dbReference>
<dbReference type="DIP" id="DIP-2585N"/>
<dbReference type="FunCoup" id="P40077">
    <property type="interactions" value="70"/>
</dbReference>
<dbReference type="IntAct" id="P40077">
    <property type="interactions" value="8"/>
</dbReference>
<dbReference type="MINT" id="P40077"/>
<dbReference type="STRING" id="4932.YER124C"/>
<dbReference type="iPTMnet" id="P40077"/>
<dbReference type="PaxDb" id="4932-YER124C"/>
<dbReference type="PeptideAtlas" id="P40077"/>
<dbReference type="EnsemblFungi" id="YER124C_mRNA">
    <property type="protein sequence ID" value="YER124C"/>
    <property type="gene ID" value="YER124C"/>
</dbReference>
<dbReference type="GeneID" id="856861"/>
<dbReference type="KEGG" id="sce:YER124C"/>
<dbReference type="AGR" id="SGD:S000000926"/>
<dbReference type="SGD" id="S000000926">
    <property type="gene designation" value="DSE1"/>
</dbReference>
<dbReference type="VEuPathDB" id="FungiDB:YER124C"/>
<dbReference type="eggNOG" id="ENOG502QTST">
    <property type="taxonomic scope" value="Eukaryota"/>
</dbReference>
<dbReference type="HOGENOM" id="CLU_033098_0_0_1"/>
<dbReference type="InParanoid" id="P40077"/>
<dbReference type="OMA" id="VKRFNHR"/>
<dbReference type="OrthoDB" id="361494at2759"/>
<dbReference type="BioCyc" id="YEAST:G3O-30287-MONOMER"/>
<dbReference type="BioGRID-ORCS" id="856861">
    <property type="hits" value="0 hits in 10 CRISPR screens"/>
</dbReference>
<dbReference type="PRO" id="PR:P40077"/>
<dbReference type="Proteomes" id="UP000002311">
    <property type="component" value="Chromosome V"/>
</dbReference>
<dbReference type="RNAct" id="P40077">
    <property type="molecule type" value="protein"/>
</dbReference>
<dbReference type="GO" id="GO:0005935">
    <property type="term" value="C:cellular bud neck"/>
    <property type="evidence" value="ECO:0007005"/>
    <property type="project" value="SGD"/>
</dbReference>
<dbReference type="GO" id="GO:0031683">
    <property type="term" value="F:G-protein beta/gamma-subunit complex binding"/>
    <property type="evidence" value="ECO:0000314"/>
    <property type="project" value="SGD"/>
</dbReference>
<dbReference type="GO" id="GO:0071555">
    <property type="term" value="P:cell wall organization"/>
    <property type="evidence" value="ECO:0007669"/>
    <property type="project" value="UniProtKB-KW"/>
</dbReference>
<dbReference type="GO" id="GO:0001403">
    <property type="term" value="P:invasive growth in response to glucose limitation"/>
    <property type="evidence" value="ECO:0000315"/>
    <property type="project" value="SGD"/>
</dbReference>
<dbReference type="GO" id="GO:0010969">
    <property type="term" value="P:regulation of pheromone-dependent signal transduction involved in conjugation with cellular fusion"/>
    <property type="evidence" value="ECO:0000315"/>
    <property type="project" value="SGD"/>
</dbReference>
<dbReference type="GO" id="GO:0000920">
    <property type="term" value="P:septum digestion after cytokinesis"/>
    <property type="evidence" value="ECO:0000315"/>
    <property type="project" value="SGD"/>
</dbReference>
<dbReference type="FunFam" id="2.130.10.10:FF:002664">
    <property type="entry name" value="Protein DSE1"/>
    <property type="match status" value="1"/>
</dbReference>
<dbReference type="Gene3D" id="2.130.10.10">
    <property type="entry name" value="YVTN repeat-like/Quinoprotein amine dehydrogenase"/>
    <property type="match status" value="1"/>
</dbReference>
<dbReference type="InterPro" id="IPR015943">
    <property type="entry name" value="WD40/YVTN_repeat-like_dom_sf"/>
</dbReference>
<dbReference type="InterPro" id="IPR036322">
    <property type="entry name" value="WD40_repeat_dom_sf"/>
</dbReference>
<dbReference type="InterPro" id="IPR001680">
    <property type="entry name" value="WD40_rpt"/>
</dbReference>
<dbReference type="SMART" id="SM00320">
    <property type="entry name" value="WD40"/>
    <property type="match status" value="2"/>
</dbReference>
<dbReference type="SUPFAM" id="SSF50978">
    <property type="entry name" value="WD40 repeat-like"/>
    <property type="match status" value="1"/>
</dbReference>
<reference key="1">
    <citation type="journal article" date="1997" name="Nature">
        <title>The nucleotide sequence of Saccharomyces cerevisiae chromosome V.</title>
        <authorList>
            <person name="Dietrich F.S."/>
            <person name="Mulligan J.T."/>
            <person name="Hennessy K.M."/>
            <person name="Yelton M.A."/>
            <person name="Allen E."/>
            <person name="Araujo R."/>
            <person name="Aviles E."/>
            <person name="Berno A."/>
            <person name="Brennan T."/>
            <person name="Carpenter J."/>
            <person name="Chen E."/>
            <person name="Cherry J.M."/>
            <person name="Chung E."/>
            <person name="Duncan M."/>
            <person name="Guzman E."/>
            <person name="Hartzell G."/>
            <person name="Hunicke-Smith S."/>
            <person name="Hyman R.W."/>
            <person name="Kayser A."/>
            <person name="Komp C."/>
            <person name="Lashkari D."/>
            <person name="Lew H."/>
            <person name="Lin D."/>
            <person name="Mosedale D."/>
            <person name="Nakahara K."/>
            <person name="Namath A."/>
            <person name="Norgren R."/>
            <person name="Oefner P."/>
            <person name="Oh C."/>
            <person name="Petel F.X."/>
            <person name="Roberts D."/>
            <person name="Sehl P."/>
            <person name="Schramm S."/>
            <person name="Shogren T."/>
            <person name="Smith V."/>
            <person name="Taylor P."/>
            <person name="Wei Y."/>
            <person name="Botstein D."/>
            <person name="Davis R.W."/>
        </authorList>
    </citation>
    <scope>NUCLEOTIDE SEQUENCE [LARGE SCALE GENOMIC DNA]</scope>
    <source>
        <strain>ATCC 204508 / S288c</strain>
    </source>
</reference>
<reference key="2">
    <citation type="journal article" date="2014" name="G3 (Bethesda)">
        <title>The reference genome sequence of Saccharomyces cerevisiae: Then and now.</title>
        <authorList>
            <person name="Engel S.R."/>
            <person name="Dietrich F.S."/>
            <person name="Fisk D.G."/>
            <person name="Binkley G."/>
            <person name="Balakrishnan R."/>
            <person name="Costanzo M.C."/>
            <person name="Dwight S.S."/>
            <person name="Hitz B.C."/>
            <person name="Karra K."/>
            <person name="Nash R.S."/>
            <person name="Weng S."/>
            <person name="Wong E.D."/>
            <person name="Lloyd P."/>
            <person name="Skrzypek M.S."/>
            <person name="Miyasato S.R."/>
            <person name="Simison M."/>
            <person name="Cherry J.M."/>
        </authorList>
    </citation>
    <scope>GENOME REANNOTATION</scope>
    <source>
        <strain>ATCC 204508 / S288c</strain>
    </source>
</reference>
<reference key="3">
    <citation type="journal article" date="2001" name="Cell">
        <title>Yeast Cbk1 and Mob2 activate daughter-specific genetic programs to induce asymmetric cell fates.</title>
        <authorList>
            <person name="Colman-Lerner A."/>
            <person name="Chin T.E."/>
            <person name="Brent R."/>
        </authorList>
    </citation>
    <scope>INDUCTION</scope>
    <scope>DEVELOPMENTAL STAGE</scope>
</reference>
<reference key="4">
    <citation type="journal article" date="2001" name="Mol. Microbiol.">
        <title>Overlapping and distinct roles of the duplicated yeast transcription factors Ace2p and Swi5p.</title>
        <authorList>
            <person name="Doolin M.-T."/>
            <person name="Johnson A.L."/>
            <person name="Johnston L.H."/>
            <person name="Butler G."/>
        </authorList>
    </citation>
    <scope>INDUCTION</scope>
    <scope>FUNCTION</scope>
</reference>
<reference key="5">
    <citation type="journal article" date="2003" name="Nature">
        <title>Global analysis of protein localization in budding yeast.</title>
        <authorList>
            <person name="Huh W.-K."/>
            <person name="Falvo J.V."/>
            <person name="Gerke L.C."/>
            <person name="Carroll A.S."/>
            <person name="Howson R.W."/>
            <person name="Weissman J.S."/>
            <person name="O'Shea E.K."/>
        </authorList>
    </citation>
    <scope>SUBCELLULAR LOCATION [LARGE SCALE ANALYSIS]</scope>
</reference>
<reference key="6">
    <citation type="journal article" date="2003" name="Nature">
        <title>Global analysis of protein expression in yeast.</title>
        <authorList>
            <person name="Ghaemmaghami S."/>
            <person name="Huh W.-K."/>
            <person name="Bower K."/>
            <person name="Howson R.W."/>
            <person name="Belle A."/>
            <person name="Dephoure N."/>
            <person name="O'Shea E.K."/>
            <person name="Weissman J.S."/>
        </authorList>
    </citation>
    <scope>LEVEL OF PROTEIN EXPRESSION [LARGE SCALE ANALYSIS]</scope>
</reference>
<reference key="7">
    <citation type="journal article" date="2004" name="J. Cell Sci.">
        <title>Swm1p subunit of the APC/cyclosome is required for activation of the daughter-specific gene expression program mediated by Ace2p during growth at high temperature in Saccharomyces cerevisiae.</title>
        <authorList>
            <person name="Ufano S."/>
            <person name="Pablo M.E."/>
            <person name="Calzada A."/>
            <person name="del Rey F."/>
            <person name="Vazquez de Aldana C.R."/>
        </authorList>
    </citation>
    <scope>INDUCTION</scope>
</reference>
<reference key="8">
    <citation type="journal article" date="2006" name="Appl. Environ. Microbiol.">
        <title>Effects of low-shear modeled microgravity on cell function, gene expression, and phenotype in Saccharomyces cerevisiae.</title>
        <authorList>
            <person name="Purevdorj-Gage B."/>
            <person name="Sheehan K.B."/>
            <person name="Hyman L.E."/>
        </authorList>
    </citation>
    <scope>INDUCTION</scope>
</reference>
<reference key="9">
    <citation type="journal article" date="2012" name="Proteomics">
        <title>Sites of ubiquitin attachment in Saccharomyces cerevisiae.</title>
        <authorList>
            <person name="Starita L.M."/>
            <person name="Lo R.S."/>
            <person name="Eng J.K."/>
            <person name="von Haller P.D."/>
            <person name="Fields S."/>
        </authorList>
    </citation>
    <scope>UBIQUITINATION [LARGE SCALE ANALYSIS] AT LYS-553</scope>
    <scope>IDENTIFICATION BY MASS SPECTROMETRY [LARGE SCALE ANALYSIS]</scope>
</reference>
<keyword id="KW-0131">Cell cycle</keyword>
<keyword id="KW-0132">Cell division</keyword>
<keyword id="KW-0961">Cell wall biogenesis/degradation</keyword>
<keyword id="KW-1017">Isopeptide bond</keyword>
<keyword id="KW-1185">Reference proteome</keyword>
<keyword id="KW-0677">Repeat</keyword>
<keyword id="KW-0832">Ubl conjugation</keyword>
<keyword id="KW-0853">WD repeat</keyword>
<comment type="function">
    <text evidence="2">Involved in cell wall metabolism and required for the separation of the mother and daughter cells.</text>
</comment>
<comment type="interaction">
    <interactant intactId="EBI-22676">
        <id>P40077</id>
    </interactant>
    <interactant intactId="EBI-3727">
        <id>P39969</id>
        <label>BOI2</label>
    </interactant>
    <organismsDiffer>false</organismsDiffer>
    <experiments>3</experiments>
</comment>
<comment type="subcellular location">
    <subcellularLocation>
        <location evidence="4">Bud neck</location>
    </subcellularLocation>
</comment>
<comment type="developmental stage">
    <text evidence="3">Expressed in daughter cells.</text>
</comment>
<comment type="induction">
    <text evidence="2 3 6 7">Expressed periodically during cell division. Requires ACE2, CBK1, MOB2 and SWI5. Expression is also increased under microgravity conditions.</text>
</comment>
<comment type="miscellaneous">
    <text evidence="5">Present with 3080 molecules/cell in log phase SD medium.</text>
</comment>
<comment type="similarity">
    <text evidence="8">Belongs to the WD repeat DSE1 family.</text>
</comment>
<evidence type="ECO:0000256" key="1">
    <source>
        <dbReference type="SAM" id="MobiDB-lite"/>
    </source>
</evidence>
<evidence type="ECO:0000269" key="2">
    <source>
    </source>
</evidence>
<evidence type="ECO:0000269" key="3">
    <source>
    </source>
</evidence>
<evidence type="ECO:0000269" key="4">
    <source>
    </source>
</evidence>
<evidence type="ECO:0000269" key="5">
    <source>
    </source>
</evidence>
<evidence type="ECO:0000269" key="6">
    <source>
    </source>
</evidence>
<evidence type="ECO:0000269" key="7">
    <source>
    </source>
</evidence>
<evidence type="ECO:0000305" key="8"/>
<evidence type="ECO:0007744" key="9">
    <source>
    </source>
</evidence>
<sequence length="573" mass="63999">MQDTKYYEPTNIFRQPAINIKKRSDKKRILQSMMTLSTYKKTWQNNTSKMNSPILRKASDNFNDYYTTKKLKSDYWKLYGVDESELSIPSDMSIVDNILLVSTMNEKDNLKLFEISAEKKLKELQTITVPGKPITCICLLPMVDFPPQIFPSSQINPNHNQLILTGHQDGIVNLIATSTYKGCAKIIKRFNHNKFLKSTVSTSIPILEITPKTAPILKVSPWNKTGFVSLLNDSLFIYDLKSNLDCIKTPIFLQSYPGINSFAVNEFHDPFLLALVGSKFGPNGISLLDLRTNLYIPDILDNSISAGCGKDHLQRKNTSLDCVWISNHHVAQSLNDKIQIWDIQSCDGKPVCELYAKKGYIESLKFNENTGALYSSDDQGFVICWDLQNLQNMKYGELVHGFNSISLDSESELLLTKQVFQCGNIIVSGMSDKNICLKSNDTKANGKGCGFLFLDMANDGSLVTLDNFCELGLHQICQVQFNVDTGKIIDGNGTGKSGISDSSMLSLSNESDHSMTETSDDMFSNSGNWDCSSANTVSEGRLNDDQEDIVFTKRMYSVNDVHLSGSTIDTTVV</sequence>
<feature type="chain" id="PRO_0000202647" description="Protein DSE1">
    <location>
        <begin position="1"/>
        <end position="573"/>
    </location>
</feature>
<feature type="repeat" description="WD 1">
    <location>
        <begin position="144"/>
        <end position="185"/>
    </location>
</feature>
<feature type="repeat" description="WD 2">
    <location>
        <begin position="315"/>
        <end position="351"/>
    </location>
</feature>
<feature type="repeat" description="WD 3">
    <location>
        <begin position="356"/>
        <end position="395"/>
    </location>
</feature>
<feature type="repeat" description="WD 4">
    <location>
        <begin position="397"/>
        <end position="448"/>
    </location>
</feature>
<feature type="region of interest" description="Disordered" evidence="1">
    <location>
        <begin position="500"/>
        <end position="519"/>
    </location>
</feature>
<feature type="compositionally biased region" description="Low complexity" evidence="1">
    <location>
        <begin position="500"/>
        <end position="509"/>
    </location>
</feature>
<feature type="cross-link" description="Glycyl lysine isopeptide (Lys-Gly) (interchain with G-Cter in ubiquitin)" evidence="9">
    <location>
        <position position="553"/>
    </location>
</feature>